<dbReference type="EC" id="1.17.4.1"/>
<dbReference type="EMBL" id="X59543">
    <property type="protein sequence ID" value="CAA42118.1"/>
    <property type="molecule type" value="mRNA"/>
</dbReference>
<dbReference type="EMBL" id="X59617">
    <property type="protein sequence ID" value="CAA42180.1"/>
    <property type="molecule type" value="mRNA"/>
</dbReference>
<dbReference type="EMBL" id="AF107045">
    <property type="protein sequence ID" value="AAD37491.1"/>
    <property type="molecule type" value="Genomic_DNA"/>
</dbReference>
<dbReference type="EMBL" id="BC006498">
    <property type="protein sequence ID" value="AAH06498.1"/>
    <property type="molecule type" value="mRNA"/>
</dbReference>
<dbReference type="EMBL" id="L10342">
    <property type="status" value="NOT_ANNOTATED_CDS"/>
    <property type="molecule type" value="Genomic_DNA"/>
</dbReference>
<dbReference type="CCDS" id="CCDS7750.1"/>
<dbReference type="PIR" id="S16680">
    <property type="entry name" value="S16680"/>
</dbReference>
<dbReference type="RefSeq" id="NP_001024.1">
    <property type="nucleotide sequence ID" value="NM_001033.5"/>
</dbReference>
<dbReference type="RefSeq" id="NP_001304993.1">
    <property type="nucleotide sequence ID" value="NM_001318064.1"/>
</dbReference>
<dbReference type="RefSeq" id="NP_001304994.1">
    <property type="nucleotide sequence ID" value="NM_001318065.1"/>
</dbReference>
<dbReference type="PDB" id="2WGH">
    <property type="method" value="X-ray"/>
    <property type="resolution" value="2.30 A"/>
    <property type="chains" value="A/B=75-742"/>
</dbReference>
<dbReference type="PDB" id="3HNC">
    <property type="method" value="X-ray"/>
    <property type="resolution" value="2.41 A"/>
    <property type="chains" value="A/B=1-792"/>
</dbReference>
<dbReference type="PDB" id="3HND">
    <property type="method" value="X-ray"/>
    <property type="resolution" value="3.21 A"/>
    <property type="chains" value="A/B=1-792"/>
</dbReference>
<dbReference type="PDB" id="3HNE">
    <property type="method" value="X-ray"/>
    <property type="resolution" value="3.11 A"/>
    <property type="chains" value="A/B=1-792"/>
</dbReference>
<dbReference type="PDB" id="3HNF">
    <property type="method" value="X-ray"/>
    <property type="resolution" value="3.16 A"/>
    <property type="chains" value="A/B=1-792"/>
</dbReference>
<dbReference type="PDB" id="4X3V">
    <property type="method" value="X-ray"/>
    <property type="resolution" value="3.70 A"/>
    <property type="chains" value="A/B=1-792"/>
</dbReference>
<dbReference type="PDB" id="5D1Y">
    <property type="method" value="X-ray"/>
    <property type="resolution" value="9.01 A"/>
    <property type="chains" value="A/B=1-792"/>
</dbReference>
<dbReference type="PDB" id="5TUS">
    <property type="method" value="X-ray"/>
    <property type="resolution" value="2.66 A"/>
    <property type="chains" value="A/B=1-792"/>
</dbReference>
<dbReference type="PDB" id="6AUI">
    <property type="method" value="EM"/>
    <property type="resolution" value="3.30 A"/>
    <property type="chains" value="A/B/C/D/E/F=1-792"/>
</dbReference>
<dbReference type="PDB" id="6L3R">
    <property type="method" value="X-ray"/>
    <property type="resolution" value="2.00 A"/>
    <property type="chains" value="A/E=75-742"/>
</dbReference>
<dbReference type="PDB" id="6L7L">
    <property type="method" value="X-ray"/>
    <property type="resolution" value="2.17 A"/>
    <property type="chains" value="A/E=75-742"/>
</dbReference>
<dbReference type="PDB" id="6LKM">
    <property type="method" value="X-ray"/>
    <property type="resolution" value="2.55 A"/>
    <property type="chains" value="A/B=75-742"/>
</dbReference>
<dbReference type="PDBsum" id="2WGH"/>
<dbReference type="PDBsum" id="3HNC"/>
<dbReference type="PDBsum" id="3HND"/>
<dbReference type="PDBsum" id="3HNE"/>
<dbReference type="PDBsum" id="3HNF"/>
<dbReference type="PDBsum" id="4X3V"/>
<dbReference type="PDBsum" id="5D1Y"/>
<dbReference type="PDBsum" id="5TUS"/>
<dbReference type="PDBsum" id="6AUI"/>
<dbReference type="PDBsum" id="6L3R"/>
<dbReference type="PDBsum" id="6L7L"/>
<dbReference type="PDBsum" id="6LKM"/>
<dbReference type="EMDB" id="EMD-7006"/>
<dbReference type="SMR" id="P23921"/>
<dbReference type="BioGRID" id="112154">
    <property type="interactions" value="160"/>
</dbReference>
<dbReference type="ComplexPortal" id="CPX-2194">
    <property type="entry name" value="Ribonucleoside-diphosphate reductase RR1 complex, RRM2 variant"/>
</dbReference>
<dbReference type="ComplexPortal" id="CPX-369">
    <property type="entry name" value="Ribonucleoside-diphosphate reductase RR1 complex, RRM2B variant"/>
</dbReference>
<dbReference type="CORUM" id="P23921"/>
<dbReference type="DIP" id="DIP-24233N"/>
<dbReference type="FunCoup" id="P23921">
    <property type="interactions" value="2226"/>
</dbReference>
<dbReference type="IntAct" id="P23921">
    <property type="interactions" value="37"/>
</dbReference>
<dbReference type="MINT" id="P23921"/>
<dbReference type="STRING" id="9606.ENSP00000300738"/>
<dbReference type="BindingDB" id="P23921"/>
<dbReference type="ChEMBL" id="CHEMBL1830"/>
<dbReference type="DrugBank" id="DB00242">
    <property type="generic name" value="Cladribine"/>
</dbReference>
<dbReference type="DrugBank" id="DB00631">
    <property type="generic name" value="Clofarabine"/>
</dbReference>
<dbReference type="DrugBank" id="DB12948">
    <property type="generic name" value="Didox"/>
</dbReference>
<dbReference type="DrugBank" id="DB01073">
    <property type="generic name" value="Fludarabine"/>
</dbReference>
<dbReference type="DrugBank" id="DB05420">
    <property type="generic name" value="Gallium maltolate"/>
</dbReference>
<dbReference type="DrugBank" id="DB00441">
    <property type="generic name" value="Gemcitabine"/>
</dbReference>
<dbReference type="DrugBank" id="DB01005">
    <property type="generic name" value="Hydroxyurea"/>
</dbReference>
<dbReference type="DrugBank" id="DB05003">
    <property type="generic name" value="Imexon"/>
</dbReference>
<dbReference type="DrugBank" id="DB01280">
    <property type="generic name" value="Nelarabine"/>
</dbReference>
<dbReference type="DrugBank" id="DB06433">
    <property type="generic name" value="Tezacitabine"/>
</dbReference>
<dbReference type="DrugCentral" id="P23921"/>
<dbReference type="GuidetoPHARMACOLOGY" id="2630"/>
<dbReference type="GlyCosmos" id="P23921">
    <property type="glycosylation" value="4 sites, 1 glycan"/>
</dbReference>
<dbReference type="GlyGen" id="P23921">
    <property type="glycosylation" value="7 sites, 1 O-linked glycan (6 sites)"/>
</dbReference>
<dbReference type="iPTMnet" id="P23921"/>
<dbReference type="MetOSite" id="P23921"/>
<dbReference type="PhosphoSitePlus" id="P23921"/>
<dbReference type="SwissPalm" id="P23921"/>
<dbReference type="BioMuta" id="RRM1"/>
<dbReference type="DMDM" id="132608"/>
<dbReference type="jPOST" id="P23921"/>
<dbReference type="MassIVE" id="P23921"/>
<dbReference type="PaxDb" id="9606-ENSP00000300738"/>
<dbReference type="PeptideAtlas" id="P23921"/>
<dbReference type="ProteomicsDB" id="54166"/>
<dbReference type="Pumba" id="P23921"/>
<dbReference type="Antibodypedia" id="10853">
    <property type="antibodies" value="683 antibodies from 40 providers"/>
</dbReference>
<dbReference type="DNASU" id="6240"/>
<dbReference type="Ensembl" id="ENST00000300738.10">
    <property type="protein sequence ID" value="ENSP00000300738.5"/>
    <property type="gene ID" value="ENSG00000167325.15"/>
</dbReference>
<dbReference type="GeneID" id="6240"/>
<dbReference type="KEGG" id="hsa:6240"/>
<dbReference type="MANE-Select" id="ENST00000300738.10">
    <property type="protein sequence ID" value="ENSP00000300738.5"/>
    <property type="RefSeq nucleotide sequence ID" value="NM_001033.5"/>
    <property type="RefSeq protein sequence ID" value="NP_001024.1"/>
</dbReference>
<dbReference type="UCSC" id="uc001lyw.5">
    <property type="organism name" value="human"/>
</dbReference>
<dbReference type="AGR" id="HGNC:10451"/>
<dbReference type="CTD" id="6240"/>
<dbReference type="DisGeNET" id="6240"/>
<dbReference type="GeneCards" id="RRM1"/>
<dbReference type="HGNC" id="HGNC:10451">
    <property type="gene designation" value="RRM1"/>
</dbReference>
<dbReference type="HPA" id="ENSG00000167325">
    <property type="expression patterns" value="Low tissue specificity"/>
</dbReference>
<dbReference type="MalaCards" id="RRM1"/>
<dbReference type="MIM" id="180410">
    <property type="type" value="gene"/>
</dbReference>
<dbReference type="MIM" id="620647">
    <property type="type" value="phenotype"/>
</dbReference>
<dbReference type="neXtProt" id="NX_P23921"/>
<dbReference type="OpenTargets" id="ENSG00000167325"/>
<dbReference type="PharmGKB" id="PA298"/>
<dbReference type="VEuPathDB" id="HostDB:ENSG00000167325"/>
<dbReference type="eggNOG" id="KOG1112">
    <property type="taxonomic scope" value="Eukaryota"/>
</dbReference>
<dbReference type="GeneTree" id="ENSGT00910000144246"/>
<dbReference type="HOGENOM" id="CLU_000404_1_0_1"/>
<dbReference type="InParanoid" id="P23921"/>
<dbReference type="OMA" id="IELPQHM"/>
<dbReference type="OrthoDB" id="3000483at2759"/>
<dbReference type="PAN-GO" id="P23921">
    <property type="GO annotations" value="4 GO annotations based on evolutionary models"/>
</dbReference>
<dbReference type="PhylomeDB" id="P23921"/>
<dbReference type="TreeFam" id="TF300578"/>
<dbReference type="BioCyc" id="MetaCyc:HS09541-MONOMER"/>
<dbReference type="BRENDA" id="1.17.4.1">
    <property type="organism ID" value="2681"/>
</dbReference>
<dbReference type="PathwayCommons" id="P23921"/>
<dbReference type="Reactome" id="R-HSA-499943">
    <property type="pathway name" value="Interconversion of nucleotide di- and triphosphates"/>
</dbReference>
<dbReference type="SignaLink" id="P23921"/>
<dbReference type="SIGNOR" id="P23921"/>
<dbReference type="BioGRID-ORCS" id="6240">
    <property type="hits" value="845 hits in 1174 CRISPR screens"/>
</dbReference>
<dbReference type="CD-CODE" id="91857CE7">
    <property type="entry name" value="Nucleolus"/>
</dbReference>
<dbReference type="ChiTaRS" id="RRM1">
    <property type="organism name" value="human"/>
</dbReference>
<dbReference type="EvolutionaryTrace" id="P23921"/>
<dbReference type="GeneWiki" id="RRM1"/>
<dbReference type="GenomeRNAi" id="6240"/>
<dbReference type="Pharos" id="P23921">
    <property type="development level" value="Tclin"/>
</dbReference>
<dbReference type="PRO" id="PR:P23921"/>
<dbReference type="Proteomes" id="UP000005640">
    <property type="component" value="Chromosome 11"/>
</dbReference>
<dbReference type="RNAct" id="P23921">
    <property type="molecule type" value="protein"/>
</dbReference>
<dbReference type="Bgee" id="ENSG00000167325">
    <property type="expression patterns" value="Expressed in ventricular zone and 217 other cell types or tissues"/>
</dbReference>
<dbReference type="ExpressionAtlas" id="P23921">
    <property type="expression patterns" value="baseline and differential"/>
</dbReference>
<dbReference type="GO" id="GO:0034451">
    <property type="term" value="C:centriolar satellite"/>
    <property type="evidence" value="ECO:0000314"/>
    <property type="project" value="HPA"/>
</dbReference>
<dbReference type="GO" id="GO:0036064">
    <property type="term" value="C:ciliary basal body"/>
    <property type="evidence" value="ECO:0000314"/>
    <property type="project" value="HPA"/>
</dbReference>
<dbReference type="GO" id="GO:0005829">
    <property type="term" value="C:cytosol"/>
    <property type="evidence" value="ECO:0000314"/>
    <property type="project" value="HPA"/>
</dbReference>
<dbReference type="GO" id="GO:0005739">
    <property type="term" value="C:mitochondrion"/>
    <property type="evidence" value="ECO:0007669"/>
    <property type="project" value="GOC"/>
</dbReference>
<dbReference type="GO" id="GO:0043025">
    <property type="term" value="C:neuronal cell body"/>
    <property type="evidence" value="ECO:0007669"/>
    <property type="project" value="Ensembl"/>
</dbReference>
<dbReference type="GO" id="GO:0005635">
    <property type="term" value="C:nuclear envelope"/>
    <property type="evidence" value="ECO:0007669"/>
    <property type="project" value="Ensembl"/>
</dbReference>
<dbReference type="GO" id="GO:0005971">
    <property type="term" value="C:ribonucleoside-diphosphate reductase complex"/>
    <property type="evidence" value="ECO:0000353"/>
    <property type="project" value="ComplexPortal"/>
</dbReference>
<dbReference type="GO" id="GO:0005524">
    <property type="term" value="F:ATP binding"/>
    <property type="evidence" value="ECO:0000318"/>
    <property type="project" value="GO_Central"/>
</dbReference>
<dbReference type="GO" id="GO:0097718">
    <property type="term" value="F:disordered domain specific binding"/>
    <property type="evidence" value="ECO:0007669"/>
    <property type="project" value="Ensembl"/>
</dbReference>
<dbReference type="GO" id="GO:0042802">
    <property type="term" value="F:identical protein binding"/>
    <property type="evidence" value="ECO:0000353"/>
    <property type="project" value="IntAct"/>
</dbReference>
<dbReference type="GO" id="GO:0061731">
    <property type="term" value="F:ribonucleoside-diphosphate reductase activity"/>
    <property type="evidence" value="ECO:0000315"/>
    <property type="project" value="CACAO"/>
</dbReference>
<dbReference type="GO" id="GO:0004748">
    <property type="term" value="F:ribonucleoside-diphosphate reductase activity, thioredoxin disulfide as acceptor"/>
    <property type="evidence" value="ECO:0000250"/>
    <property type="project" value="UniProtKB"/>
</dbReference>
<dbReference type="GO" id="GO:0009265">
    <property type="term" value="P:2'-deoxyribonucleotide biosynthetic process"/>
    <property type="evidence" value="ECO:0000314"/>
    <property type="project" value="ComplexPortal"/>
</dbReference>
<dbReference type="GO" id="GO:0021846">
    <property type="term" value="P:cell proliferation in forebrain"/>
    <property type="evidence" value="ECO:0007669"/>
    <property type="project" value="Ensembl"/>
</dbReference>
<dbReference type="GO" id="GO:0009263">
    <property type="term" value="P:deoxyribonucleotide biosynthetic process"/>
    <property type="evidence" value="ECO:0000250"/>
    <property type="project" value="UniProtKB"/>
</dbReference>
<dbReference type="GO" id="GO:0006281">
    <property type="term" value="P:DNA repair"/>
    <property type="evidence" value="ECO:0000314"/>
    <property type="project" value="ComplexPortal"/>
</dbReference>
<dbReference type="GO" id="GO:0000731">
    <property type="term" value="P:DNA synthesis involved in DNA repair"/>
    <property type="evidence" value="ECO:0000303"/>
    <property type="project" value="ComplexPortal"/>
</dbReference>
<dbReference type="GO" id="GO:0008584">
    <property type="term" value="P:male gonad development"/>
    <property type="evidence" value="ECO:0007669"/>
    <property type="project" value="Ensembl"/>
</dbReference>
<dbReference type="GO" id="GO:0006264">
    <property type="term" value="P:mitochondrial DNA replication"/>
    <property type="evidence" value="ECO:0000315"/>
    <property type="project" value="ComplexPortal"/>
</dbReference>
<dbReference type="GO" id="GO:0070318">
    <property type="term" value="P:positive regulation of G0 to G1 transition"/>
    <property type="evidence" value="ECO:0000314"/>
    <property type="project" value="ComplexPortal"/>
</dbReference>
<dbReference type="GO" id="GO:1900087">
    <property type="term" value="P:positive regulation of G1/S transition of mitotic cell cycle"/>
    <property type="evidence" value="ECO:0000314"/>
    <property type="project" value="ComplexPortal"/>
</dbReference>
<dbReference type="GO" id="GO:0010971">
    <property type="term" value="P:positive regulation of G2/M transition of mitotic cell cycle"/>
    <property type="evidence" value="ECO:0000314"/>
    <property type="project" value="ComplexPortal"/>
</dbReference>
<dbReference type="GO" id="GO:0051290">
    <property type="term" value="P:protein heterotetramerization"/>
    <property type="evidence" value="ECO:0007669"/>
    <property type="project" value="Ensembl"/>
</dbReference>
<dbReference type="GO" id="GO:0006206">
    <property type="term" value="P:pyrimidine nucleobase metabolic process"/>
    <property type="evidence" value="ECO:0007669"/>
    <property type="project" value="Ensembl"/>
</dbReference>
<dbReference type="GO" id="GO:0010212">
    <property type="term" value="P:response to ionizing radiation"/>
    <property type="evidence" value="ECO:0007669"/>
    <property type="project" value="Ensembl"/>
</dbReference>
<dbReference type="GO" id="GO:0060041">
    <property type="term" value="P:retina development in camera-type eye"/>
    <property type="evidence" value="ECO:0007669"/>
    <property type="project" value="Ensembl"/>
</dbReference>
<dbReference type="GO" id="GO:0009185">
    <property type="term" value="P:ribonucleoside diphosphate metabolic process"/>
    <property type="evidence" value="ECO:0000314"/>
    <property type="project" value="ComplexPortal"/>
</dbReference>
<dbReference type="CDD" id="cd01679">
    <property type="entry name" value="RNR_I"/>
    <property type="match status" value="1"/>
</dbReference>
<dbReference type="FunFam" id="3.20.70.20:FF:000001">
    <property type="entry name" value="Ribonucleoside-diphosphate reductase"/>
    <property type="match status" value="1"/>
</dbReference>
<dbReference type="Gene3D" id="3.20.70.20">
    <property type="match status" value="1"/>
</dbReference>
<dbReference type="InterPro" id="IPR005144">
    <property type="entry name" value="ATP-cone_dom"/>
</dbReference>
<dbReference type="InterPro" id="IPR013346">
    <property type="entry name" value="NrdE_NrdA_C"/>
</dbReference>
<dbReference type="InterPro" id="IPR000788">
    <property type="entry name" value="RNR_lg_C"/>
</dbReference>
<dbReference type="InterPro" id="IPR013509">
    <property type="entry name" value="RNR_lsu_N"/>
</dbReference>
<dbReference type="InterPro" id="IPR008926">
    <property type="entry name" value="RNR_R1-su_N"/>
</dbReference>
<dbReference type="InterPro" id="IPR039718">
    <property type="entry name" value="Rrm1"/>
</dbReference>
<dbReference type="NCBIfam" id="TIGR02506">
    <property type="entry name" value="NrdE_NrdA"/>
    <property type="match status" value="1"/>
</dbReference>
<dbReference type="PANTHER" id="PTHR11573">
    <property type="entry name" value="RIBONUCLEOSIDE-DIPHOSPHATE REDUCTASE LARGE CHAIN"/>
    <property type="match status" value="1"/>
</dbReference>
<dbReference type="PANTHER" id="PTHR11573:SF6">
    <property type="entry name" value="RIBONUCLEOSIDE-DIPHOSPHATE REDUCTASE LARGE SUBUNIT"/>
    <property type="match status" value="1"/>
</dbReference>
<dbReference type="Pfam" id="PF03477">
    <property type="entry name" value="ATP-cone"/>
    <property type="match status" value="1"/>
</dbReference>
<dbReference type="Pfam" id="PF02867">
    <property type="entry name" value="Ribonuc_red_lgC"/>
    <property type="match status" value="1"/>
</dbReference>
<dbReference type="Pfam" id="PF00317">
    <property type="entry name" value="Ribonuc_red_lgN"/>
    <property type="match status" value="1"/>
</dbReference>
<dbReference type="PRINTS" id="PR01183">
    <property type="entry name" value="RIBORDTASEM1"/>
</dbReference>
<dbReference type="SUPFAM" id="SSF51998">
    <property type="entry name" value="PFL-like glycyl radical enzymes"/>
    <property type="match status" value="1"/>
</dbReference>
<dbReference type="SUPFAM" id="SSF48168">
    <property type="entry name" value="R1 subunit of ribonucleotide reductase, N-terminal domain"/>
    <property type="match status" value="1"/>
</dbReference>
<dbReference type="PROSITE" id="PS51161">
    <property type="entry name" value="ATP_CONE"/>
    <property type="match status" value="1"/>
</dbReference>
<dbReference type="PROSITE" id="PS00089">
    <property type="entry name" value="RIBORED_LARGE"/>
    <property type="match status" value="1"/>
</dbReference>
<feature type="chain" id="PRO_0000187190" description="Ribonucleoside-diphosphate reductase large subunit">
    <location>
        <begin position="1"/>
        <end position="792"/>
    </location>
</feature>
<feature type="domain" description="ATP-cone" evidence="2">
    <location>
        <begin position="1"/>
        <end position="92"/>
    </location>
</feature>
<feature type="active site" description="Proton acceptor" evidence="1">
    <location>
        <position position="427"/>
    </location>
</feature>
<feature type="active site" description="Cysteine radical intermediate" evidence="1">
    <location>
        <position position="429"/>
    </location>
</feature>
<feature type="active site" description="Proton acceptor" evidence="1">
    <location>
        <position position="431"/>
    </location>
</feature>
<feature type="binding site" evidence="12">
    <location>
        <begin position="5"/>
        <end position="6"/>
    </location>
    <ligand>
        <name>ATP</name>
        <dbReference type="ChEBI" id="CHEBI:30616"/>
        <note>allosteric activator</note>
    </ligand>
</feature>
<feature type="binding site" evidence="12">
    <location>
        <begin position="11"/>
        <end position="17"/>
    </location>
    <ligand>
        <name>ATP</name>
        <dbReference type="ChEBI" id="CHEBI:30616"/>
        <note>allosteric activator</note>
    </ligand>
</feature>
<feature type="binding site" evidence="12">
    <location>
        <position position="53"/>
    </location>
    <ligand>
        <name>ATP</name>
        <dbReference type="ChEBI" id="CHEBI:30616"/>
        <note>allosteric activator</note>
    </ligand>
</feature>
<feature type="binding site" evidence="12">
    <location>
        <position position="57"/>
    </location>
    <ligand>
        <name>ATP</name>
        <dbReference type="ChEBI" id="CHEBI:30616"/>
        <note>allosteric activator</note>
    </ligand>
</feature>
<feature type="binding site" evidence="11">
    <location>
        <position position="202"/>
    </location>
    <ligand>
        <name>GDP</name>
        <dbReference type="ChEBI" id="CHEBI:58189"/>
    </ligand>
</feature>
<feature type="binding site" evidence="11">
    <location>
        <position position="217"/>
    </location>
    <ligand>
        <name>GDP</name>
        <dbReference type="ChEBI" id="CHEBI:58189"/>
    </ligand>
</feature>
<feature type="binding site" evidence="12">
    <location>
        <begin position="226"/>
        <end position="228"/>
    </location>
    <ligand>
        <name>dTTP</name>
        <dbReference type="ChEBI" id="CHEBI:37568"/>
        <note>allosteric effector that controls substrate specificity</note>
    </ligand>
</feature>
<feature type="binding site" evidence="12">
    <location>
        <position position="243"/>
    </location>
    <ligand>
        <name>dTTP</name>
        <dbReference type="ChEBI" id="CHEBI:37568"/>
        <note>allosteric effector that controls substrate specificity</note>
    </ligand>
</feature>
<feature type="binding site" evidence="12">
    <location>
        <position position="256"/>
    </location>
    <ligand>
        <name>dTTP</name>
        <dbReference type="ChEBI" id="CHEBI:37568"/>
        <note>allosteric effector that controls substrate specificity</note>
    </ligand>
</feature>
<feature type="binding site" evidence="12">
    <location>
        <begin position="263"/>
        <end position="264"/>
    </location>
    <ligand>
        <name>dTTP</name>
        <dbReference type="ChEBI" id="CHEBI:37568"/>
        <note>allosteric effector that controls substrate specificity</note>
    </ligand>
</feature>
<feature type="binding site" evidence="11">
    <location>
        <position position="427"/>
    </location>
    <ligand>
        <name>GDP</name>
        <dbReference type="ChEBI" id="CHEBI:58189"/>
    </ligand>
</feature>
<feature type="binding site" evidence="11">
    <location>
        <position position="431"/>
    </location>
    <ligand>
        <name>GDP</name>
        <dbReference type="ChEBI" id="CHEBI:58189"/>
    </ligand>
</feature>
<feature type="binding site" evidence="11">
    <location>
        <begin position="604"/>
        <end position="607"/>
    </location>
    <ligand>
        <name>GDP</name>
        <dbReference type="ChEBI" id="CHEBI:58189"/>
    </ligand>
</feature>
<feature type="site" description="Important for hydrogen atom transfer" evidence="1">
    <location>
        <position position="218"/>
    </location>
</feature>
<feature type="site" description="Important for hydrogen atom transfer" evidence="1">
    <location>
        <position position="444"/>
    </location>
</feature>
<feature type="site" description="Important for electron transfer" evidence="1">
    <location>
        <position position="737"/>
    </location>
</feature>
<feature type="site" description="Important for electron transfer" evidence="1">
    <location>
        <position position="738"/>
    </location>
</feature>
<feature type="site" description="Interacts with thioredoxin/glutaredoxin" evidence="1">
    <location>
        <position position="787"/>
    </location>
</feature>
<feature type="site" description="Interacts with thioredoxin/glutaredoxin" evidence="1">
    <location>
        <position position="790"/>
    </location>
</feature>
<feature type="modified residue" description="N6-acetyllysine" evidence="14">
    <location>
        <position position="17"/>
    </location>
</feature>
<feature type="modified residue" description="N6-acetyllysine" evidence="14">
    <location>
        <position position="376"/>
    </location>
</feature>
<feature type="modified residue" description="Phosphothreonine" evidence="15">
    <location>
        <position position="751"/>
    </location>
</feature>
<feature type="disulfide bond" description="Redox-active" evidence="1">
    <location>
        <begin position="218"/>
        <end position="444"/>
    </location>
</feature>
<feature type="sequence variant" id="VAR_089195" description="In PEOB6; uncertain significance; dbSNP:rs141634151." evidence="7">
    <original>R</original>
    <variation>C</variation>
    <location>
        <position position="381"/>
    </location>
</feature>
<feature type="sequence variant" id="VAR_089196" description="In PEOB6; uncertain significance; dbSNP:rs2094584404." evidence="7">
    <original>R</original>
    <variation>H</variation>
    <location>
        <position position="381"/>
    </location>
</feature>
<feature type="sequence variant" id="VAR_089197" description="Found at heterozygosity in a patient with features of progressive external ophthalmoplegia with mitochondrial DNA deletions; uncertain significance." evidence="7">
    <original>N</original>
    <variation>K</variation>
    <location>
        <position position="427"/>
    </location>
</feature>
<feature type="sequence variant" id="VAR_052052" description="In dbSNP:rs2228123.">
    <original>K</original>
    <variation>Q</variation>
    <location>
        <position position="590"/>
    </location>
</feature>
<feature type="sequence variant" id="VAR_052053" description="In dbSNP:rs2229196.">
    <original>V</original>
    <variation>A</variation>
    <location>
        <position position="778"/>
    </location>
</feature>
<feature type="mutagenesis site" description="Severely decreases interaction with AHCYL1 in the presence of dATP." evidence="6">
    <original>D</original>
    <variation>N</variation>
    <location>
        <position position="57"/>
    </location>
</feature>
<feature type="sequence conflict" description="In Ref. 3; AAD37491." evidence="8" ref="3">
    <original>R</original>
    <variation>Q</variation>
    <location>
        <position position="6"/>
    </location>
</feature>
<feature type="strand" evidence="17">
    <location>
        <begin position="2"/>
        <end position="4"/>
    </location>
</feature>
<feature type="turn" evidence="21">
    <location>
        <begin position="6"/>
        <end position="8"/>
    </location>
</feature>
<feature type="strand" evidence="17">
    <location>
        <begin position="10"/>
        <end position="12"/>
    </location>
</feature>
<feature type="helix" evidence="17">
    <location>
        <begin position="15"/>
        <end position="23"/>
    </location>
</feature>
<feature type="helix" evidence="21">
    <location>
        <begin position="24"/>
        <end position="26"/>
    </location>
</feature>
<feature type="turn" evidence="17">
    <location>
        <begin position="31"/>
        <end position="33"/>
    </location>
</feature>
<feature type="helix" evidence="17">
    <location>
        <begin position="36"/>
        <end position="44"/>
    </location>
</feature>
<feature type="strand" evidence="18">
    <location>
        <begin position="48"/>
        <end position="50"/>
    </location>
</feature>
<feature type="helix" evidence="17">
    <location>
        <begin position="53"/>
        <end position="66"/>
    </location>
</feature>
<feature type="helix" evidence="17">
    <location>
        <begin position="67"/>
        <end position="69"/>
    </location>
</feature>
<feature type="helix" evidence="22">
    <location>
        <begin position="76"/>
        <end position="88"/>
    </location>
</feature>
<feature type="helix" evidence="22">
    <location>
        <begin position="94"/>
        <end position="103"/>
    </location>
</feature>
<feature type="turn" evidence="22">
    <location>
        <begin position="107"/>
        <end position="109"/>
    </location>
</feature>
<feature type="helix" evidence="22">
    <location>
        <begin position="118"/>
        <end position="126"/>
    </location>
</feature>
<feature type="helix" evidence="22">
    <location>
        <begin position="128"/>
        <end position="134"/>
    </location>
</feature>
<feature type="helix" evidence="22">
    <location>
        <begin position="137"/>
        <end position="142"/>
    </location>
</feature>
<feature type="helix" evidence="22">
    <location>
        <begin position="145"/>
        <end position="154"/>
    </location>
</feature>
<feature type="strand" evidence="20">
    <location>
        <begin position="158"/>
        <end position="163"/>
    </location>
</feature>
<feature type="helix" evidence="22">
    <location>
        <begin position="167"/>
        <end position="179"/>
    </location>
</feature>
<feature type="helix" evidence="22">
    <location>
        <begin position="183"/>
        <end position="194"/>
    </location>
</feature>
<feature type="strand" evidence="22">
    <location>
        <begin position="197"/>
        <end position="200"/>
    </location>
</feature>
<feature type="helix" evidence="22">
    <location>
        <begin position="202"/>
        <end position="207"/>
    </location>
</feature>
<feature type="strand" evidence="22">
    <location>
        <begin position="210"/>
        <end position="212"/>
    </location>
</feature>
<feature type="strand" evidence="22">
    <location>
        <begin position="218"/>
        <end position="222"/>
    </location>
</feature>
<feature type="helix" evidence="22">
    <location>
        <begin position="228"/>
        <end position="243"/>
    </location>
</feature>
<feature type="strand" evidence="22">
    <location>
        <begin position="247"/>
        <end position="251"/>
    </location>
</feature>
<feature type="strand" evidence="19">
    <location>
        <begin position="258"/>
        <end position="261"/>
    </location>
</feature>
<feature type="turn" evidence="22">
    <location>
        <begin position="263"/>
        <end position="266"/>
    </location>
</feature>
<feature type="strand" evidence="19">
    <location>
        <begin position="268"/>
        <end position="270"/>
    </location>
</feature>
<feature type="helix" evidence="22">
    <location>
        <begin position="272"/>
        <end position="285"/>
    </location>
</feature>
<feature type="strand" evidence="21">
    <location>
        <begin position="286"/>
        <end position="288"/>
    </location>
</feature>
<feature type="strand" evidence="24">
    <location>
        <begin position="289"/>
        <end position="291"/>
    </location>
</feature>
<feature type="strand" evidence="22">
    <location>
        <begin position="297"/>
        <end position="301"/>
    </location>
</feature>
<feature type="helix" evidence="22">
    <location>
        <begin position="308"/>
        <end position="311"/>
    </location>
</feature>
<feature type="turn" evidence="22">
    <location>
        <begin position="312"/>
        <end position="315"/>
    </location>
</feature>
<feature type="strand" evidence="22">
    <location>
        <begin position="317"/>
        <end position="319"/>
    </location>
</feature>
<feature type="helix" evidence="22">
    <location>
        <begin position="321"/>
        <end position="323"/>
    </location>
</feature>
<feature type="strand" evidence="22">
    <location>
        <begin position="328"/>
        <end position="334"/>
    </location>
</feature>
<feature type="helix" evidence="22">
    <location>
        <begin position="336"/>
        <end position="343"/>
    </location>
</feature>
<feature type="strand" evidence="22">
    <location>
        <begin position="347"/>
        <end position="351"/>
    </location>
</feature>
<feature type="turn" evidence="22">
    <location>
        <begin position="353"/>
        <end position="355"/>
    </location>
</feature>
<feature type="helix" evidence="22">
    <location>
        <begin position="359"/>
        <end position="361"/>
    </location>
</feature>
<feature type="helix" evidence="22">
    <location>
        <begin position="364"/>
        <end position="376"/>
    </location>
</feature>
<feature type="strand" evidence="22">
    <location>
        <begin position="381"/>
        <end position="385"/>
    </location>
</feature>
<feature type="helix" evidence="22">
    <location>
        <begin position="386"/>
        <end position="400"/>
    </location>
</feature>
<feature type="strand" evidence="22">
    <location>
        <begin position="404"/>
        <end position="407"/>
    </location>
</feature>
<feature type="helix" evidence="22">
    <location>
        <begin position="408"/>
        <end position="413"/>
    </location>
</feature>
<feature type="helix" evidence="22">
    <location>
        <begin position="418"/>
        <end position="420"/>
    </location>
</feature>
<feature type="strand" evidence="17">
    <location>
        <begin position="428"/>
        <end position="430"/>
    </location>
</feature>
<feature type="strand" evidence="22">
    <location>
        <begin position="442"/>
        <end position="444"/>
    </location>
</feature>
<feature type="strand" evidence="22">
    <location>
        <begin position="446"/>
        <end position="450"/>
    </location>
</feature>
<feature type="helix" evidence="22">
    <location>
        <begin position="451"/>
        <end position="454"/>
    </location>
</feature>
<feature type="strand" evidence="18">
    <location>
        <begin position="459"/>
        <end position="461"/>
    </location>
</feature>
<feature type="helix" evidence="22">
    <location>
        <begin position="463"/>
        <end position="483"/>
    </location>
</feature>
<feature type="helix" evidence="22">
    <location>
        <begin position="489"/>
        <end position="498"/>
    </location>
</feature>
<feature type="strand" evidence="22">
    <location>
        <begin position="502"/>
        <end position="506"/>
    </location>
</feature>
<feature type="helix" evidence="22">
    <location>
        <begin position="508"/>
        <end position="514"/>
    </location>
</feature>
<feature type="strand" evidence="24">
    <location>
        <begin position="519"/>
        <end position="521"/>
    </location>
</feature>
<feature type="helix" evidence="22">
    <location>
        <begin position="522"/>
        <end position="550"/>
    </location>
</feature>
<feature type="helix" evidence="19">
    <location>
        <begin position="554"/>
        <end position="556"/>
    </location>
</feature>
<feature type="helix" evidence="22">
    <location>
        <begin position="561"/>
        <end position="563"/>
    </location>
</feature>
<feature type="helix" evidence="22">
    <location>
        <begin position="567"/>
        <end position="570"/>
    </location>
</feature>
<feature type="strand" evidence="16">
    <location>
        <begin position="577"/>
        <end position="579"/>
    </location>
</feature>
<feature type="helix" evidence="22">
    <location>
        <begin position="581"/>
        <end position="591"/>
    </location>
</feature>
<feature type="helix" evidence="22">
    <location>
        <begin position="605"/>
        <end position="611"/>
    </location>
</feature>
<feature type="strand" evidence="21">
    <location>
        <begin position="615"/>
        <end position="618"/>
    </location>
</feature>
<feature type="strand" evidence="22">
    <location>
        <begin position="623"/>
        <end position="625"/>
    </location>
</feature>
<feature type="strand" evidence="17">
    <location>
        <begin position="632"/>
        <end position="637"/>
    </location>
</feature>
<feature type="helix" evidence="22">
    <location>
        <begin position="639"/>
        <end position="647"/>
    </location>
</feature>
<feature type="helix" evidence="22">
    <location>
        <begin position="655"/>
        <end position="661"/>
    </location>
</feature>
<feature type="turn" evidence="22">
    <location>
        <begin position="662"/>
        <end position="664"/>
    </location>
</feature>
<feature type="helix" evidence="21">
    <location>
        <begin position="666"/>
        <end position="668"/>
    </location>
</feature>
<feature type="strand" evidence="23">
    <location>
        <begin position="670"/>
        <end position="672"/>
    </location>
</feature>
<feature type="helix" evidence="22">
    <location>
        <begin position="674"/>
        <end position="679"/>
    </location>
</feature>
<feature type="helix" evidence="22">
    <location>
        <begin position="683"/>
        <end position="685"/>
    </location>
</feature>
<feature type="helix" evidence="22">
    <location>
        <begin position="688"/>
        <end position="699"/>
    </location>
</feature>
<feature type="strand" evidence="21">
    <location>
        <begin position="709"/>
        <end position="711"/>
    </location>
</feature>
<feature type="helix" evidence="22">
    <location>
        <begin position="717"/>
        <end position="729"/>
    </location>
</feature>
<feature type="strand" evidence="22">
    <location>
        <begin position="733"/>
        <end position="737"/>
    </location>
</feature>
<organism>
    <name type="scientific">Homo sapiens</name>
    <name type="common">Human</name>
    <dbReference type="NCBI Taxonomy" id="9606"/>
    <lineage>
        <taxon>Eukaryota</taxon>
        <taxon>Metazoa</taxon>
        <taxon>Chordata</taxon>
        <taxon>Craniata</taxon>
        <taxon>Vertebrata</taxon>
        <taxon>Euteleostomi</taxon>
        <taxon>Mammalia</taxon>
        <taxon>Eutheria</taxon>
        <taxon>Euarchontoglires</taxon>
        <taxon>Primates</taxon>
        <taxon>Haplorrhini</taxon>
        <taxon>Catarrhini</taxon>
        <taxon>Hominidae</taxon>
        <taxon>Homo</taxon>
    </lineage>
</organism>
<reference key="1">
    <citation type="journal article" date="1991" name="Nucleic Acids Res.">
        <title>Human M1 subunit of ribonucleotide reductase: cDNA sequence and expression in stimulated lymphocytes.</title>
        <authorList>
            <person name="Parker N.J."/>
            <person name="Begley C.G."/>
            <person name="Fox R.M."/>
        </authorList>
    </citation>
    <scope>NUCLEOTIDE SEQUENCE [MRNA]</scope>
    <source>
        <tissue>Bone marrow</tissue>
    </source>
</reference>
<reference key="2">
    <citation type="journal article" date="1992" name="DNA Seq.">
        <title>Sequence analysis of the large and small subunits of human ribonucleotide reductase.</title>
        <authorList>
            <person name="Pavloff N."/>
            <person name="Rivard D."/>
            <person name="Masson S."/>
            <person name="Shen S.-H."/>
            <person name="Mes-Masson A.-M."/>
        </authorList>
    </citation>
    <scope>NUCLEOTIDE SEQUENCE [MRNA]</scope>
    <source>
        <tissue>Mammary carcinoma</tissue>
    </source>
</reference>
<reference key="3">
    <citation type="journal article" date="1999" name="Genomics">
        <title>A 1.4-Mb high-resolution physical map and contig of chromosome segment 11p15.5 and genes in the LOH11A metastasis suppressor region.</title>
        <authorList>
            <person name="Bepler G."/>
            <person name="O'Briant K.C."/>
            <person name="Kim Y.-C."/>
            <person name="Schreiber G."/>
            <person name="Pitterle D.M."/>
        </authorList>
    </citation>
    <scope>NUCLEOTIDE SEQUENCE [GENOMIC DNA]</scope>
</reference>
<reference key="4">
    <citation type="journal article" date="2004" name="Genome Res.">
        <title>The status, quality, and expansion of the NIH full-length cDNA project: the Mammalian Gene Collection (MGC).</title>
        <authorList>
            <consortium name="The MGC Project Team"/>
        </authorList>
    </citation>
    <scope>NUCLEOTIDE SEQUENCE [LARGE SCALE MRNA]</scope>
    <source>
        <tissue>Lymph</tissue>
    </source>
</reference>
<reference key="5">
    <citation type="journal article" date="1994" name="Genomics">
        <title>Human R1 subunit of ribonucleotide reductase (RRM1): 5' flanking region of the gene.</title>
        <authorList>
            <person name="Parker N.J."/>
            <person name="Begley C.G."/>
            <person name="Fox R.M."/>
        </authorList>
    </citation>
    <scope>NUCLEOTIDE SEQUENCE [GENOMIC DNA] OF 1-6</scope>
    <source>
        <tissue>Placenta</tissue>
    </source>
</reference>
<reference key="6">
    <citation type="journal article" date="1991" name="Biochem. Pharmacol.">
        <title>Human ribonucleotide reductase. Activation and inhibition by analogs of ATP.</title>
        <authorList>
            <person name="Harrington J.A."/>
            <person name="Spector T."/>
        </authorList>
    </citation>
    <scope>ACTIVITY REGULATION</scope>
</reference>
<reference key="7">
    <citation type="journal article" date="2003" name="Cancer Res.">
        <title>Wild-type p53 regulates human ribonucleotide reductase by protein-protein interaction with p53R2 as well as hRRM2 subunits.</title>
        <authorList>
            <person name="Xue L."/>
            <person name="Zhou B."/>
            <person name="Liu X."/>
            <person name="Qiu W."/>
            <person name="Jin Z."/>
            <person name="Yen Y."/>
        </authorList>
    </citation>
    <scope>INTERACTION WITH RRM2B</scope>
</reference>
<reference key="8">
    <citation type="journal article" date="2006" name="Biochem. Biophys. Res. Commun.">
        <title>Characterization of enzymatic properties of human ribonucleotide reductase holoenzyme reconstituted in vitro from hRRM1, hRRM2, and p53R2 subunits.</title>
        <authorList>
            <person name="Qiu W."/>
            <person name="Zhou B."/>
            <person name="Darwish D."/>
            <person name="Shao J."/>
            <person name="Yen Y."/>
        </authorList>
    </citation>
    <scope>CATALYTIC ACTIVITY</scope>
    <scope>SUBUNIT</scope>
    <scope>ACTIVITY REGULATION</scope>
</reference>
<reference key="9">
    <citation type="journal article" date="2009" name="Science">
        <title>Lysine acetylation targets protein complexes and co-regulates major cellular functions.</title>
        <authorList>
            <person name="Choudhary C."/>
            <person name="Kumar C."/>
            <person name="Gnad F."/>
            <person name="Nielsen M.L."/>
            <person name="Rehman M."/>
            <person name="Walther T.C."/>
            <person name="Olsen J.V."/>
            <person name="Mann M."/>
        </authorList>
    </citation>
    <scope>ACETYLATION [LARGE SCALE ANALYSIS] AT LYS-17 AND LYS-376</scope>
    <scope>IDENTIFICATION BY MASS SPECTROMETRY [LARGE SCALE ANALYSIS]</scope>
</reference>
<reference key="10">
    <citation type="journal article" date="2011" name="BMC Syst. Biol.">
        <title>Initial characterization of the human central proteome.</title>
        <authorList>
            <person name="Burkard T.R."/>
            <person name="Planyavsky M."/>
            <person name="Kaupe I."/>
            <person name="Breitwieser F.P."/>
            <person name="Buerckstuemmer T."/>
            <person name="Bennett K.L."/>
            <person name="Superti-Furga G."/>
            <person name="Colinge J."/>
        </authorList>
    </citation>
    <scope>IDENTIFICATION BY MASS SPECTROMETRY [LARGE SCALE ANALYSIS]</scope>
</reference>
<reference key="11">
    <citation type="journal article" date="2013" name="J. Proteome Res.">
        <title>Toward a comprehensive characterization of a human cancer cell phosphoproteome.</title>
        <authorList>
            <person name="Zhou H."/>
            <person name="Di Palma S."/>
            <person name="Preisinger C."/>
            <person name="Peng M."/>
            <person name="Polat A.N."/>
            <person name="Heck A.J."/>
            <person name="Mohammed S."/>
        </authorList>
    </citation>
    <scope>PHOSPHORYLATION [LARGE SCALE ANALYSIS] AT THR-751</scope>
    <scope>IDENTIFICATION BY MASS SPECTROMETRY [LARGE SCALE ANALYSIS]</scope>
    <source>
        <tissue>Cervix carcinoma</tissue>
        <tissue>Erythroleukemia</tissue>
    </source>
</reference>
<reference key="12">
    <citation type="journal article" date="2014" name="Science">
        <title>Enzyme regulation. IRBIT is a novel regulator of ribonucleotide reductase in higher eukaryotes.</title>
        <authorList>
            <person name="Arnaoutov A."/>
            <person name="Dasso M."/>
        </authorList>
    </citation>
    <scope>ACTIVITY REGULATION</scope>
    <scope>MUTAGENESIS OF ASP-57</scope>
    <scope>INTERACTION WITH AHCYL1</scope>
</reference>
<reference evidence="9 10 11 12 13" key="13">
    <citation type="journal article" date="2011" name="Nat. Struct. Mol. Biol.">
        <title>Structural basis for allosteric regulation of human ribonucleotide reductase by nucleotide-induced oligomerization.</title>
        <authorList>
            <person name="Fairman J.W."/>
            <person name="Wijerathna S.R."/>
            <person name="Ahmad M.F."/>
            <person name="Xu H."/>
            <person name="Nakano R."/>
            <person name="Jha S."/>
            <person name="Prendergast J."/>
            <person name="Welin R.M."/>
            <person name="Flodin S."/>
            <person name="Roos A."/>
            <person name="Nordlund P."/>
            <person name="Li Z."/>
            <person name="Walz T."/>
            <person name="Dealwis C.G."/>
        </authorList>
    </citation>
    <scope>X-RAY CRYSTALLOGRAPHY (2.3 ANGSTROMS) OF 75-742 IN COMPLEX WITH ALLOSTERIC EFFECTORS ATP; DATP; DTTP; SUBSTRATE GDP AND MAGNESIUM IONS</scope>
</reference>
<reference key="14">
    <citation type="journal article" date="2022" name="J. Clin. Invest.">
        <title>RRM1 variants cause a mitochondrial DNA maintenance disorder via impaired de novo nucleotide synthesis.</title>
        <authorList>
            <person name="Shintaku J."/>
            <person name="Pernice W.M."/>
            <person name="Eyaid W."/>
            <person name="Gc J.B."/>
            <person name="Brown Z.P."/>
            <person name="Juanola-Falgarona M."/>
            <person name="Torres-Torronteras J."/>
            <person name="Sommerville E.W."/>
            <person name="Hellebrekers D.M."/>
            <person name="Blakely E.L."/>
            <person name="Donaldson A."/>
            <person name="van de Laar I."/>
            <person name="Leu C.S."/>
            <person name="Marti R."/>
            <person name="Frank J."/>
            <person name="Tanji K."/>
            <person name="Koolen D.A."/>
            <person name="Rodenburg R.J."/>
            <person name="Chinnery P.F."/>
            <person name="Smeets H.J.M."/>
            <person name="Gorman G.S."/>
            <person name="Bonnen P.E."/>
            <person name="Taylor R.W."/>
            <person name="Hirano M."/>
        </authorList>
    </citation>
    <scope>VARIANTS PEOB6 HIS-381 AND CYS-381</scope>
    <scope>VARIANT LYS-427</scope>
    <scope>INVOLVEMENT IN PEOB6</scope>
</reference>
<accession>P23921</accession>
<accession>Q9UNN2</accession>
<comment type="function">
    <text>Provides the precursors necessary for DNA synthesis. Catalyzes the biosynthesis of deoxyribonucleotides from the corresponding ribonucleotides.</text>
</comment>
<comment type="catalytic activity">
    <reaction evidence="3">
        <text>a 2'-deoxyribonucleoside 5'-diphosphate + [thioredoxin]-disulfide + H2O = a ribonucleoside 5'-diphosphate + [thioredoxin]-dithiol</text>
        <dbReference type="Rhea" id="RHEA:23252"/>
        <dbReference type="Rhea" id="RHEA-COMP:10698"/>
        <dbReference type="Rhea" id="RHEA-COMP:10700"/>
        <dbReference type="ChEBI" id="CHEBI:15377"/>
        <dbReference type="ChEBI" id="CHEBI:29950"/>
        <dbReference type="ChEBI" id="CHEBI:50058"/>
        <dbReference type="ChEBI" id="CHEBI:57930"/>
        <dbReference type="ChEBI" id="CHEBI:73316"/>
        <dbReference type="EC" id="1.17.4.1"/>
    </reaction>
</comment>
<comment type="activity regulation">
    <text evidence="3 4 6">Under complex allosteric control mediated by deoxynucleoside triphosphates and ATP binding to separate specificity and activation sites on the M1 subunit. The type of nucleotide bound at the specificity site determines substrate preference. It seems probable that ATP makes the enzyme reduce CDP and UDP, dGTP favors ADP reduction and dTTP favors GDP reduction. Stimulated by ATP and inhibited by dATP binding to the activity site, the dATP inhibition is mediated by AHCYL1 which stabilizes dATP in the site.</text>
</comment>
<comment type="subunit">
    <text evidence="3 5 6">Heterodimer of a large and a small subunit. Heterodimer with small subunit RRM2 or RRM2B. The heterodimer with RRM2 has higher catalytic activity than the heterodimer with RRM2B. Interacts with AHCYL1 which inhibits its activity.</text>
</comment>
<comment type="interaction">
    <interactant intactId="EBI-717006">
        <id>P23921</id>
    </interactant>
    <interactant intactId="EBI-717006">
        <id>P23921</id>
        <label>RRM1</label>
    </interactant>
    <organismsDiffer>false</organismsDiffer>
    <experiments>5</experiments>
</comment>
<comment type="interaction">
    <interactant intactId="EBI-717006">
        <id>P23921</id>
    </interactant>
    <interactant intactId="EBI-2339245">
        <id>P31350</id>
        <label>RRM2</label>
    </interactant>
    <organismsDiffer>false</organismsDiffer>
    <experiments>7</experiments>
</comment>
<comment type="interaction">
    <interactant intactId="EBI-717006">
        <id>P23921</id>
    </interactant>
    <interactant intactId="EBI-625509">
        <id>Q8N720</id>
        <label>ZNF655</label>
    </interactant>
    <organismsDiffer>false</organismsDiffer>
    <experiments>3</experiments>
</comment>
<comment type="subcellular location">
    <subcellularLocation>
        <location>Cytoplasm</location>
    </subcellularLocation>
</comment>
<comment type="disease" evidence="7">
    <disease id="DI-06811">
        <name>Progressive external ophthalmoplegia with mitochondrial DNA deletions, autosomal recessive 6</name>
        <acronym>PEOB6</acronym>
        <description>A form of progressive external ophthalmoplegia, a mitochondrial myopathy characterized by progressive paralysis of the levator palpebrae, orbicularis oculi, and extraocular muscles. Ragged red fibers are seen on muscle biopsy.</description>
        <dbReference type="MIM" id="620647"/>
    </disease>
    <text>The disease may be caused by variants affecting the gene represented in this entry.</text>
</comment>
<comment type="miscellaneous">
    <text>Two distinct regulatory sites have been defined: the specificity site, which controls substrate specificity, and the activity site which regulates overall catalytic activity. A substrate-binding catalytic site, located on M1, is formed only in the presence of the second subunit M2.</text>
</comment>
<comment type="miscellaneous">
    <text>The level of the enzyme activity is closely correlated with the growth rate of a cell and appears to vary with the cell cycle.</text>
</comment>
<comment type="similarity">
    <text evidence="8">Belongs to the ribonucleoside diphosphate reductase large chain family.</text>
</comment>
<comment type="online information" name="Wikipedia">
    <link uri="https://en.wikipedia.org/wiki/Ribonucleotide_reductase"/>
    <text>Ribonucleotide reductase entry</text>
</comment>
<comment type="online information" name="Atlas of Genetics and Cytogenetics in Oncology and Haematology">
    <link uri="https://atlasgeneticsoncology.org/gene/42174/RRM1"/>
</comment>
<evidence type="ECO:0000250" key="1"/>
<evidence type="ECO:0000255" key="2">
    <source>
        <dbReference type="PROSITE-ProRule" id="PRU00492"/>
    </source>
</evidence>
<evidence type="ECO:0000269" key="3">
    <source>
    </source>
</evidence>
<evidence type="ECO:0000269" key="4">
    <source>
    </source>
</evidence>
<evidence type="ECO:0000269" key="5">
    <source>
    </source>
</evidence>
<evidence type="ECO:0000269" key="6">
    <source>
    </source>
</evidence>
<evidence type="ECO:0000269" key="7">
    <source>
    </source>
</evidence>
<evidence type="ECO:0000305" key="8"/>
<evidence type="ECO:0007744" key="9">
    <source>
        <dbReference type="PDB" id="2WGH"/>
    </source>
</evidence>
<evidence type="ECO:0007744" key="10">
    <source>
        <dbReference type="PDB" id="3HNC"/>
    </source>
</evidence>
<evidence type="ECO:0007744" key="11">
    <source>
        <dbReference type="PDB" id="3HND"/>
    </source>
</evidence>
<evidence type="ECO:0007744" key="12">
    <source>
        <dbReference type="PDB" id="3HNE"/>
    </source>
</evidence>
<evidence type="ECO:0007744" key="13">
    <source>
        <dbReference type="PDB" id="3HNF"/>
    </source>
</evidence>
<evidence type="ECO:0007744" key="14">
    <source>
    </source>
</evidence>
<evidence type="ECO:0007744" key="15">
    <source>
    </source>
</evidence>
<evidence type="ECO:0007829" key="16">
    <source>
        <dbReference type="PDB" id="2WGH"/>
    </source>
</evidence>
<evidence type="ECO:0007829" key="17">
    <source>
        <dbReference type="PDB" id="3HNC"/>
    </source>
</evidence>
<evidence type="ECO:0007829" key="18">
    <source>
        <dbReference type="PDB" id="3HND"/>
    </source>
</evidence>
<evidence type="ECO:0007829" key="19">
    <source>
        <dbReference type="PDB" id="3HNE"/>
    </source>
</evidence>
<evidence type="ECO:0007829" key="20">
    <source>
        <dbReference type="PDB" id="3HNF"/>
    </source>
</evidence>
<evidence type="ECO:0007829" key="21">
    <source>
        <dbReference type="PDB" id="6AUI"/>
    </source>
</evidence>
<evidence type="ECO:0007829" key="22">
    <source>
        <dbReference type="PDB" id="6L3R"/>
    </source>
</evidence>
<evidence type="ECO:0007829" key="23">
    <source>
        <dbReference type="PDB" id="6L7L"/>
    </source>
</evidence>
<evidence type="ECO:0007829" key="24">
    <source>
        <dbReference type="PDB" id="6LKM"/>
    </source>
</evidence>
<keyword id="KW-0002">3D-structure</keyword>
<keyword id="KW-0007">Acetylation</keyword>
<keyword id="KW-0021">Allosteric enzyme</keyword>
<keyword id="KW-0067">ATP-binding</keyword>
<keyword id="KW-0963">Cytoplasm</keyword>
<keyword id="KW-0215">Deoxyribonucleotide synthesis</keyword>
<keyword id="KW-1015">Disulfide bond</keyword>
<keyword id="KW-0547">Nucleotide-binding</keyword>
<keyword id="KW-0560">Oxidoreductase</keyword>
<keyword id="KW-0597">Phosphoprotein</keyword>
<keyword id="KW-1274">Primary mitochondrial disease</keyword>
<keyword id="KW-0935">Progressive external ophthalmoplegia</keyword>
<keyword id="KW-1267">Proteomics identification</keyword>
<keyword id="KW-1185">Reference proteome</keyword>
<proteinExistence type="evidence at protein level"/>
<protein>
    <recommendedName>
        <fullName>Ribonucleoside-diphosphate reductase large subunit</fullName>
        <ecNumber>1.17.4.1</ecNumber>
    </recommendedName>
    <alternativeName>
        <fullName>Ribonucleoside-diphosphate reductase subunit M1</fullName>
    </alternativeName>
    <alternativeName>
        <fullName>Ribonucleotide reductase large subunit</fullName>
    </alternativeName>
</protein>
<gene>
    <name type="primary">RRM1</name>
    <name type="synonym">RR1</name>
</gene>
<sequence length="792" mass="90070">MHVIKRDGRQERVMFDKITSRIQKLCYGLNMDFVDPAQITMKVIQGLYSGVTTVELDTLAAETAATLTTKHPDYAILAARIAVSNLHKETKKVFSDVMEDLYNYINPHNGKHSPMVAKSTLDIVLANKDRLNSAIIYDRDFSYNYFGFKTLERSYLLKINGKVAERPQHMLMRVSVGIHKEDIDAAIETYNLLSERWFTHASPTLFNAGTNRPQLSSCFLLSMKDDSIEGIYDTLKQCALISKSAGGIGVAVSCIRATGSYIAGTNGNSNGLVPMLRVYNNTARYVDQGGNKRPGAFAIYLEPWHLDIFEFLDLKKNTGKEEQRARDLFFALWIPDLFMKRVETNQDWSLMCPNECPGLDEVWGEEFEKLYASYEKQGRVRKVVKAQQLWYAIIESQTETGTPYMLYKDSCNRKSNQQNLGTIKCSNLCTEIVEYTSKDEVAVCNLASLALNMYVTSEHTYDFKKLAEVTKVVVRNLNKIIDINYYPVPEACLSNKRHRPIGIGVQGLADAFILMRYPFESAEAQLLNKQIFETIYYGALEASCDLAKEQGPYETYEGSPVSKGILQYDMWNVTPTDLWDWKVLKEKIAKYGIRNSLLIAPMPTASTAQILGNNESIEPYTSNIYTRRVLSGEFQIVNPHLLKDLTERGLWHEEMKNQIIACNGSIQSIPEIPDDLKQLYKTVWEISQKTVLKMAAERGAFIDQSQSLNIHIAEPNYGKLTSMHFYGWKQGLKTGMYYLRTRPAANPIQFTLNKEKLKDKEKVSKEEEEKERNTAAMVCSLENRDECLMCGS</sequence>
<name>RIR1_HUMAN</name>